<reference key="1">
    <citation type="journal article" date="1990" name="Nucleic Acids Res.">
        <title>Nucleotide sequence of the bovine bactericidal permeability increasing protein (BPI).</title>
        <authorList>
            <person name="Leong S.R."/>
            <person name="Camerato T."/>
        </authorList>
    </citation>
    <scope>NUCLEOTIDE SEQUENCE [MRNA]</scope>
    <source>
        <tissue>Bone marrow</tissue>
    </source>
</reference>
<reference key="2">
    <citation type="submission" date="2005-08" db="EMBL/GenBank/DDBJ databases">
        <authorList>
            <consortium name="NIH - Mammalian Gene Collection (MGC) project"/>
        </authorList>
    </citation>
    <scope>NUCLEOTIDE SEQUENCE [LARGE SCALE MRNA]</scope>
    <source>
        <strain>Crossbred X Angus</strain>
        <tissue>Ileum</tissue>
    </source>
</reference>
<sequence>MARGPDTARRWATLVVLAALSTAVTTTNPGIVARITQKGLDYACQQGVLTLQKELEKITIPNFSGNFKIKYLGKGQYSFFSMVIQGFNLPNSQIRPLPDKGLDLSIRDASIKIRGKWKARKNFIKLGGNFDLSVEGISILAGLNLGYDPASGHSTVTCSSCSSGINTVRIHISGSSLGWLIQLFRKRIESLLQKSMTRKICEVVTSTVSSKLQPYFQTLPVTTKLDKVAGVDYSLVAPPRATANNLDWLLKGEFFSLAHRSPPPFAPPALAFPSDHDRMVYLGISEYFFNTAGFVYQKAGALNLTLRDDMIPKESKFRLTTKFFGILIPQVAKMFPDMQMQLFIWASLPPKLTMKPSGLDLIFVLDTQAFAILPNSSLDPLFLLEMNLNLSVVVGAKSDRLIGELRLDKLLLELKHSDIGPFSVESLQSVINYVMPTIVLPVINKKLQKGFPLPLPAYIELFNLTLQPYQDFLLFGADVHYS</sequence>
<evidence type="ECO:0000250" key="1">
    <source>
        <dbReference type="UniProtKB" id="P17213"/>
    </source>
</evidence>
<evidence type="ECO:0000255" key="2"/>
<evidence type="ECO:0000305" key="3"/>
<name>BPI_BOVIN</name>
<proteinExistence type="evidence at transcript level"/>
<feature type="signal peptide" evidence="2">
    <location>
        <begin position="1"/>
        <end position="26"/>
    </location>
</feature>
<feature type="chain" id="PRO_0000017153" description="Bactericidal permeability-increasing protein">
    <location>
        <begin position="27"/>
        <end position="482"/>
    </location>
</feature>
<feature type="region of interest" description="Central sheet, part 1" evidence="1">
    <location>
        <begin position="27"/>
        <end position="36"/>
    </location>
</feature>
<feature type="region of interest" description="N-terminal barrel" evidence="1">
    <location>
        <begin position="36"/>
        <end position="219"/>
    </location>
</feature>
<feature type="region of interest" description="Central sheet, part 2" evidence="1">
    <location>
        <begin position="221"/>
        <end position="285"/>
    </location>
</feature>
<feature type="region of interest" description="Cleavage sites for elastase" evidence="2">
    <location>
        <begin position="235"/>
        <end position="240"/>
    </location>
</feature>
<feature type="region of interest" description="C-terminal barrel" evidence="1">
    <location>
        <begin position="286"/>
        <end position="456"/>
    </location>
</feature>
<feature type="region of interest" description="Central sheet, part 3" evidence="1">
    <location>
        <begin position="463"/>
        <end position="482"/>
    </location>
</feature>
<feature type="glycosylation site" description="N-linked (GlcNAc...) asparagine" evidence="2">
    <location>
        <position position="62"/>
    </location>
</feature>
<feature type="glycosylation site" description="N-linked (GlcNAc...) asparagine" evidence="2">
    <location>
        <position position="303"/>
    </location>
</feature>
<feature type="glycosylation site" description="N-linked (GlcNAc...) asparagine" evidence="2">
    <location>
        <position position="375"/>
    </location>
</feature>
<feature type="glycosylation site" description="N-linked (GlcNAc...) asparagine" evidence="2">
    <location>
        <position position="389"/>
    </location>
</feature>
<feature type="glycosylation site" description="N-linked (GlcNAc...) asparagine" evidence="2">
    <location>
        <position position="463"/>
    </location>
</feature>
<feature type="disulfide bond" evidence="1">
    <location>
        <begin position="161"/>
        <end position="201"/>
    </location>
</feature>
<feature type="sequence conflict" description="In Ref. 1; CAA36797." evidence="3" ref="1">
    <original>S</original>
    <variation>G</variation>
    <location>
        <position position="21"/>
    </location>
</feature>
<feature type="sequence conflict" description="In Ref. 1; CAA36797." evidence="3" ref="1">
    <original>G</original>
    <variation>S</variation>
    <location>
        <position position="358"/>
    </location>
</feature>
<feature type="sequence conflict" description="In Ref. 1; CAA36797." evidence="3" ref="1">
    <original>H</original>
    <variation>Q</variation>
    <location>
        <position position="480"/>
    </location>
</feature>
<organism>
    <name type="scientific">Bos taurus</name>
    <name type="common">Bovine</name>
    <dbReference type="NCBI Taxonomy" id="9913"/>
    <lineage>
        <taxon>Eukaryota</taxon>
        <taxon>Metazoa</taxon>
        <taxon>Chordata</taxon>
        <taxon>Craniata</taxon>
        <taxon>Vertebrata</taxon>
        <taxon>Euteleostomi</taxon>
        <taxon>Mammalia</taxon>
        <taxon>Eutheria</taxon>
        <taxon>Laurasiatheria</taxon>
        <taxon>Artiodactyla</taxon>
        <taxon>Ruminantia</taxon>
        <taxon>Pecora</taxon>
        <taxon>Bovidae</taxon>
        <taxon>Bovinae</taxon>
        <taxon>Bos</taxon>
    </lineage>
</organism>
<keyword id="KW-0044">Antibiotic</keyword>
<keyword id="KW-0929">Antimicrobial</keyword>
<keyword id="KW-1015">Disulfide bond</keyword>
<keyword id="KW-0325">Glycoprotein</keyword>
<keyword id="KW-0391">Immunity</keyword>
<keyword id="KW-0399">Innate immunity</keyword>
<keyword id="KW-0472">Membrane</keyword>
<keyword id="KW-1185">Reference proteome</keyword>
<keyword id="KW-0964">Secreted</keyword>
<keyword id="KW-0732">Signal</keyword>
<accession>P17453</accession>
<accession>Q3T0P4</accession>
<dbReference type="EMBL" id="X52563">
    <property type="protein sequence ID" value="CAA36797.1"/>
    <property type="molecule type" value="mRNA"/>
</dbReference>
<dbReference type="EMBL" id="BC102310">
    <property type="protein sequence ID" value="AAI02311.1"/>
    <property type="molecule type" value="mRNA"/>
</dbReference>
<dbReference type="PIR" id="S10180">
    <property type="entry name" value="S10180"/>
</dbReference>
<dbReference type="RefSeq" id="NP_776320.1">
    <property type="nucleotide sequence ID" value="NM_173895.2"/>
</dbReference>
<dbReference type="RefSeq" id="XP_024856025.1">
    <property type="nucleotide sequence ID" value="XM_025000257.2"/>
</dbReference>
<dbReference type="RefSeq" id="XP_024856026.1">
    <property type="nucleotide sequence ID" value="XM_025000258.2"/>
</dbReference>
<dbReference type="SMR" id="P17453"/>
<dbReference type="FunCoup" id="P17453">
    <property type="interactions" value="142"/>
</dbReference>
<dbReference type="STRING" id="9913.ENSBTAP00000018669"/>
<dbReference type="GlyCosmos" id="P17453">
    <property type="glycosylation" value="5 sites, No reported glycans"/>
</dbReference>
<dbReference type="GlyGen" id="P17453">
    <property type="glycosylation" value="5 sites"/>
</dbReference>
<dbReference type="PaxDb" id="9913-ENSBTAP00000018669"/>
<dbReference type="PeptideAtlas" id="P17453"/>
<dbReference type="Ensembl" id="ENSBTAT00000018669.7">
    <property type="protein sequence ID" value="ENSBTAP00000018669.6"/>
    <property type="gene ID" value="ENSBTAG00000014046.7"/>
</dbReference>
<dbReference type="GeneID" id="280734"/>
<dbReference type="KEGG" id="bta:280734"/>
<dbReference type="CTD" id="671"/>
<dbReference type="VEuPathDB" id="HostDB:ENSBTAG00000014046"/>
<dbReference type="VGNC" id="VGNC:97246">
    <property type="gene designation" value="BPI"/>
</dbReference>
<dbReference type="eggNOG" id="KOG4160">
    <property type="taxonomic scope" value="Eukaryota"/>
</dbReference>
<dbReference type="GeneTree" id="ENSGT01130000278326"/>
<dbReference type="HOGENOM" id="CLU_028970_3_2_1"/>
<dbReference type="InParanoid" id="P17453"/>
<dbReference type="OMA" id="WKARKRF"/>
<dbReference type="OrthoDB" id="10255543at2759"/>
<dbReference type="Reactome" id="R-BTA-166016">
    <property type="pathway name" value="Toll Like Receptor 4 (TLR4) Cascade"/>
</dbReference>
<dbReference type="Reactome" id="R-BTA-6798695">
    <property type="pathway name" value="Neutrophil degranulation"/>
</dbReference>
<dbReference type="Reactome" id="R-BTA-6803157">
    <property type="pathway name" value="Antimicrobial peptides"/>
</dbReference>
<dbReference type="Proteomes" id="UP000009136">
    <property type="component" value="Chromosome 13"/>
</dbReference>
<dbReference type="Bgee" id="ENSBTAG00000014046">
    <property type="expression patterns" value="Expressed in ascending colon and 82 other cell types or tissues"/>
</dbReference>
<dbReference type="GO" id="GO:0005615">
    <property type="term" value="C:extracellular space"/>
    <property type="evidence" value="ECO:0000318"/>
    <property type="project" value="GO_Central"/>
</dbReference>
<dbReference type="GO" id="GO:0016020">
    <property type="term" value="C:membrane"/>
    <property type="evidence" value="ECO:0007669"/>
    <property type="project" value="UniProtKB-KW"/>
</dbReference>
<dbReference type="GO" id="GO:0001530">
    <property type="term" value="F:lipopolysaccharide binding"/>
    <property type="evidence" value="ECO:0000318"/>
    <property type="project" value="GO_Central"/>
</dbReference>
<dbReference type="GO" id="GO:0050829">
    <property type="term" value="P:defense response to Gram-negative bacterium"/>
    <property type="evidence" value="ECO:0000318"/>
    <property type="project" value="GO_Central"/>
</dbReference>
<dbReference type="GO" id="GO:0045087">
    <property type="term" value="P:innate immune response"/>
    <property type="evidence" value="ECO:0000318"/>
    <property type="project" value="GO_Central"/>
</dbReference>
<dbReference type="GO" id="GO:0031663">
    <property type="term" value="P:lipopolysaccharide-mediated signaling pathway"/>
    <property type="evidence" value="ECO:0000318"/>
    <property type="project" value="GO_Central"/>
</dbReference>
<dbReference type="GO" id="GO:0032715">
    <property type="term" value="P:negative regulation of interleukin-6 production"/>
    <property type="evidence" value="ECO:0000318"/>
    <property type="project" value="GO_Central"/>
</dbReference>
<dbReference type="GO" id="GO:0032717">
    <property type="term" value="P:negative regulation of interleukin-8 production"/>
    <property type="evidence" value="ECO:0000318"/>
    <property type="project" value="GO_Central"/>
</dbReference>
<dbReference type="GO" id="GO:0043031">
    <property type="term" value="P:negative regulation of macrophage activation"/>
    <property type="evidence" value="ECO:0000318"/>
    <property type="project" value="GO_Central"/>
</dbReference>
<dbReference type="GO" id="GO:0032720">
    <property type="term" value="P:negative regulation of tumor necrosis factor production"/>
    <property type="evidence" value="ECO:0000318"/>
    <property type="project" value="GO_Central"/>
</dbReference>
<dbReference type="CDD" id="cd00025">
    <property type="entry name" value="BPI1"/>
    <property type="match status" value="1"/>
</dbReference>
<dbReference type="CDD" id="cd00026">
    <property type="entry name" value="BPI2"/>
    <property type="match status" value="1"/>
</dbReference>
<dbReference type="FunFam" id="3.15.20.10:FF:000001">
    <property type="entry name" value="Phospholipid transfer protein"/>
    <property type="match status" value="1"/>
</dbReference>
<dbReference type="FunFam" id="3.15.10.10:FF:000001">
    <property type="entry name" value="phospholipid transfer protein-like"/>
    <property type="match status" value="1"/>
</dbReference>
<dbReference type="Gene3D" id="3.15.10.10">
    <property type="entry name" value="Bactericidal permeability-increasing protein, domain 1"/>
    <property type="match status" value="1"/>
</dbReference>
<dbReference type="Gene3D" id="3.15.20.10">
    <property type="entry name" value="Bactericidal permeability-increasing protein, domain 2"/>
    <property type="match status" value="1"/>
</dbReference>
<dbReference type="InterPro" id="IPR017943">
    <property type="entry name" value="Bactericidal_perm-incr_a/b_dom"/>
</dbReference>
<dbReference type="InterPro" id="IPR030675">
    <property type="entry name" value="BPI/LBP"/>
</dbReference>
<dbReference type="InterPro" id="IPR032942">
    <property type="entry name" value="BPI/LBP/Plunc"/>
</dbReference>
<dbReference type="InterPro" id="IPR001124">
    <property type="entry name" value="Lipid-bd_serum_glycop_C"/>
</dbReference>
<dbReference type="InterPro" id="IPR017954">
    <property type="entry name" value="Lipid-bd_serum_glycop_CS"/>
</dbReference>
<dbReference type="InterPro" id="IPR017942">
    <property type="entry name" value="Lipid-bd_serum_glycop_N"/>
</dbReference>
<dbReference type="PANTHER" id="PTHR10504">
    <property type="entry name" value="BACTERICIDAL PERMEABILITY-INCREASING BPI PROTEIN-RELATED"/>
    <property type="match status" value="1"/>
</dbReference>
<dbReference type="PANTHER" id="PTHR10504:SF84">
    <property type="entry name" value="BACTERICIDAL PERMEABILITY-INCREASING PROTEIN"/>
    <property type="match status" value="1"/>
</dbReference>
<dbReference type="Pfam" id="PF01273">
    <property type="entry name" value="LBP_BPI_CETP"/>
    <property type="match status" value="1"/>
</dbReference>
<dbReference type="Pfam" id="PF02886">
    <property type="entry name" value="LBP_BPI_CETP_C"/>
    <property type="match status" value="1"/>
</dbReference>
<dbReference type="PIRSF" id="PIRSF002417">
    <property type="entry name" value="Lipid_binding_protein"/>
    <property type="match status" value="1"/>
</dbReference>
<dbReference type="SMART" id="SM00328">
    <property type="entry name" value="BPI1"/>
    <property type="match status" value="1"/>
</dbReference>
<dbReference type="SMART" id="SM00329">
    <property type="entry name" value="BPI2"/>
    <property type="match status" value="1"/>
</dbReference>
<dbReference type="SUPFAM" id="SSF55394">
    <property type="entry name" value="Bactericidal permeability-increasing protein, BPI"/>
    <property type="match status" value="2"/>
</dbReference>
<dbReference type="PROSITE" id="PS00400">
    <property type="entry name" value="LBP_BPI_CETP"/>
    <property type="match status" value="1"/>
</dbReference>
<comment type="function">
    <text evidence="1">The cytotoxic action of BPI is limited to many species of Gram-negative bacteria; this specificity may be explained by a strong affinity of the very basic N-terminal half for the negatively charged lipopolysaccharides that are unique to the Gram-negative bacterial outer envelope.</text>
</comment>
<comment type="subunit">
    <text evidence="1">Monomer. Homodimer; disulfide-linked.</text>
</comment>
<comment type="subcellular location">
    <subcellularLocation>
        <location evidence="1">Secreted</location>
    </subcellularLocation>
    <subcellularLocation>
        <location evidence="1">Cytoplasmic granule membrane</location>
    </subcellularLocation>
    <text evidence="1">Membrane-associated in polymorphonuclear Leukocytes (PMN) granules.</text>
</comment>
<comment type="tissue specificity">
    <text>Restricted to cells of the myeloid series.</text>
</comment>
<comment type="domain">
    <text evidence="1">The N-terminal region may be exposed to the interior of the granule, whereas the C-terminal portion may be embedded in the membrane. During phagocytosis and degranulation, proteases may be released and activated and cleave BPI at the junction of the N- and C-terminal portions of the molecule, providing controlled release of the N-terminal antibacterial fragment when bacteria are ingested.</text>
</comment>
<comment type="domain">
    <text evidence="1">The N- and C-terminal barrels adopt an identical fold despite having only 13% of conserved residues.</text>
</comment>
<comment type="similarity">
    <text evidence="3">Belongs to the BPI/LBP/Plunc superfamily. BPI/LBP family.</text>
</comment>
<protein>
    <recommendedName>
        <fullName>Bactericidal permeability-increasing protein</fullName>
        <shortName>BPI</shortName>
    </recommendedName>
</protein>
<gene>
    <name type="primary">BPI</name>
</gene>